<protein>
    <recommendedName>
        <fullName>Probable hydroxyacid-oxoacid transhydrogenase, mitochondrial</fullName>
        <shortName>HOT</shortName>
        <ecNumber>1.1.99.24</ecNumber>
    </recommendedName>
</protein>
<name>HOT_DROPS</name>
<gene>
    <name type="ORF">GA17444</name>
</gene>
<proteinExistence type="inferred from homology"/>
<sequence length="464" mass="50033">MSRKNVLNLINTIVANSCKCPAHSHNYGSAAPTGVQTGQKEYAFEMSASTVRFGPGVSVEVGADLRNLGAKKVCLVTDRNVAKLPSVKVALDSLARHGINYEVYDETRVEPTDASLWHAADYARQNEFDAFLAIGGGSVMDTAKAANLFSSDREAEFLDYVNCPIGKGKEISVKLKPLIAMPTTSGTGSETTGVAIFDYKRLHAKTGISSKYLKPTLAIIDPLHTLSQPERVMAFAGFDVFCHALESFTAVDYRERGPAPSDPSLRPTYQGRNPISDVWARFALETIRKNFINAIYEPGNLEARSQMHLASTMAGVGFGNAGVHLCHGLSYPISGNVRNYKPAGYTADHALIPHGLSVVISAPAVFEFTAPACPDRHLEAAKLLGAKVDGVRASDAGRLLADTVRGFMQRAGIENGLRELGFSSSDVPNLVDGTLPQERITKLAPRAQTQENLAQLFENSMVAY</sequence>
<organism>
    <name type="scientific">Drosophila pseudoobscura pseudoobscura</name>
    <name type="common">Fruit fly</name>
    <dbReference type="NCBI Taxonomy" id="46245"/>
    <lineage>
        <taxon>Eukaryota</taxon>
        <taxon>Metazoa</taxon>
        <taxon>Ecdysozoa</taxon>
        <taxon>Arthropoda</taxon>
        <taxon>Hexapoda</taxon>
        <taxon>Insecta</taxon>
        <taxon>Pterygota</taxon>
        <taxon>Neoptera</taxon>
        <taxon>Endopterygota</taxon>
        <taxon>Diptera</taxon>
        <taxon>Brachycera</taxon>
        <taxon>Muscomorpha</taxon>
        <taxon>Ephydroidea</taxon>
        <taxon>Drosophilidae</taxon>
        <taxon>Drosophila</taxon>
        <taxon>Sophophora</taxon>
    </lineage>
</organism>
<keyword id="KW-0496">Mitochondrion</keyword>
<keyword id="KW-0560">Oxidoreductase</keyword>
<keyword id="KW-1185">Reference proteome</keyword>
<keyword id="KW-0809">Transit peptide</keyword>
<dbReference type="EC" id="1.1.99.24"/>
<dbReference type="EMBL" id="CM000071">
    <property type="protein sequence ID" value="EAL26233.2"/>
    <property type="molecule type" value="Genomic_DNA"/>
</dbReference>
<dbReference type="RefSeq" id="XP_001361654.2">
    <property type="nucleotide sequence ID" value="XM_001361617.3"/>
</dbReference>
<dbReference type="SMR" id="Q28XT3"/>
<dbReference type="FunCoup" id="Q28XT3">
    <property type="interactions" value="244"/>
</dbReference>
<dbReference type="STRING" id="46245.Q28XT3"/>
<dbReference type="EnsemblMetazoa" id="FBtr0280027">
    <property type="protein sequence ID" value="FBpp0278465"/>
    <property type="gene ID" value="FBgn0077457"/>
</dbReference>
<dbReference type="KEGG" id="dpo:4805213"/>
<dbReference type="CTD" id="37551"/>
<dbReference type="eggNOG" id="KOG3857">
    <property type="taxonomic scope" value="Eukaryota"/>
</dbReference>
<dbReference type="HOGENOM" id="CLU_007207_0_7_1"/>
<dbReference type="InParanoid" id="Q28XT3"/>
<dbReference type="OMA" id="NLMGAGC"/>
<dbReference type="Proteomes" id="UP000001819">
    <property type="component" value="Chromosome 3"/>
</dbReference>
<dbReference type="Bgee" id="FBgn0077457">
    <property type="expression patterns" value="Expressed in insect adult head and 2 other cell types or tissues"/>
</dbReference>
<dbReference type="GO" id="GO:0005739">
    <property type="term" value="C:mitochondrion"/>
    <property type="evidence" value="ECO:0000250"/>
    <property type="project" value="UniProtKB"/>
</dbReference>
<dbReference type="GO" id="GO:0004022">
    <property type="term" value="F:alcohol dehydrogenase (NAD+) activity"/>
    <property type="evidence" value="ECO:0007669"/>
    <property type="project" value="InterPro"/>
</dbReference>
<dbReference type="GO" id="GO:0047988">
    <property type="term" value="F:hydroxyacid-oxoacid transhydrogenase activity"/>
    <property type="evidence" value="ECO:0000250"/>
    <property type="project" value="UniProtKB"/>
</dbReference>
<dbReference type="GO" id="GO:0046872">
    <property type="term" value="F:metal ion binding"/>
    <property type="evidence" value="ECO:0007669"/>
    <property type="project" value="InterPro"/>
</dbReference>
<dbReference type="GO" id="GO:0019552">
    <property type="term" value="P:glutamate catabolic process via 2-hydroxyglutarate"/>
    <property type="evidence" value="ECO:0000250"/>
    <property type="project" value="UniProtKB"/>
</dbReference>
<dbReference type="CDD" id="cd08190">
    <property type="entry name" value="HOT"/>
    <property type="match status" value="1"/>
</dbReference>
<dbReference type="FunFam" id="1.20.1090.10:FF:000003">
    <property type="entry name" value="Probable hydroxyacid-oxoacid transhydrogenase, mitochondrial"/>
    <property type="match status" value="1"/>
</dbReference>
<dbReference type="FunFam" id="3.40.50.1970:FF:000010">
    <property type="entry name" value="Probable hydroxyacid-oxoacid transhydrogenase, mitochondrial"/>
    <property type="match status" value="1"/>
</dbReference>
<dbReference type="Gene3D" id="3.40.50.1970">
    <property type="match status" value="1"/>
</dbReference>
<dbReference type="Gene3D" id="1.20.1090.10">
    <property type="entry name" value="Dehydroquinate synthase-like - alpha domain"/>
    <property type="match status" value="1"/>
</dbReference>
<dbReference type="InterPro" id="IPR001670">
    <property type="entry name" value="ADH_Fe/GldA"/>
</dbReference>
<dbReference type="InterPro" id="IPR056798">
    <property type="entry name" value="ADH_Fe_C"/>
</dbReference>
<dbReference type="InterPro" id="IPR039697">
    <property type="entry name" value="Alcohol_dehydrogenase_Fe"/>
</dbReference>
<dbReference type="InterPro" id="IPR042157">
    <property type="entry name" value="HOT"/>
</dbReference>
<dbReference type="PANTHER" id="PTHR11496">
    <property type="entry name" value="ALCOHOL DEHYDROGENASE"/>
    <property type="match status" value="1"/>
</dbReference>
<dbReference type="PANTHER" id="PTHR11496:SF83">
    <property type="entry name" value="HYDROXYACID-OXOACID TRANSHYDROGENASE, MITOCHONDRIAL"/>
    <property type="match status" value="1"/>
</dbReference>
<dbReference type="Pfam" id="PF25137">
    <property type="entry name" value="ADH_Fe_C"/>
    <property type="match status" value="1"/>
</dbReference>
<dbReference type="Pfam" id="PF00465">
    <property type="entry name" value="Fe-ADH"/>
    <property type="match status" value="1"/>
</dbReference>
<dbReference type="SUPFAM" id="SSF56796">
    <property type="entry name" value="Dehydroquinate synthase-like"/>
    <property type="match status" value="1"/>
</dbReference>
<evidence type="ECO:0000250" key="1"/>
<evidence type="ECO:0000255" key="2"/>
<evidence type="ECO:0000305" key="3"/>
<feature type="transit peptide" description="Mitochondrion" evidence="2">
    <location>
        <begin position="1"/>
        <end status="unknown"/>
    </location>
</feature>
<feature type="chain" id="PRO_0000323006" description="Probable hydroxyacid-oxoacid transhydrogenase, mitochondrial">
    <location>
        <begin status="unknown"/>
        <end position="464"/>
    </location>
</feature>
<comment type="function">
    <text evidence="1">Catalyzes the cofactor-independent reversible oxidation of gamma-hydroxybutyrate (GHB) to succinic semialdehyde (SSA) coupled to reduction of 2-ketoglutarate (2-KG) to D-2-hydroxyglutarate (D-2-HG). L-3-hydroxybutyrate (L-3-OHB) is also a substrate for HOT when using 2-KG as hydrogen acceptor, resulting in the formation of D-2-HG (By similarity).</text>
</comment>
<comment type="catalytic activity">
    <reaction>
        <text>(S)-3-hydroxybutanoate + 2-oxoglutarate = (R)-2-hydroxyglutarate + acetoacetate</text>
        <dbReference type="Rhea" id="RHEA:23048"/>
        <dbReference type="ChEBI" id="CHEBI:11047"/>
        <dbReference type="ChEBI" id="CHEBI:13705"/>
        <dbReference type="ChEBI" id="CHEBI:15801"/>
        <dbReference type="ChEBI" id="CHEBI:16810"/>
        <dbReference type="EC" id="1.1.99.24"/>
    </reaction>
</comment>
<comment type="catalytic activity">
    <reaction>
        <text>4-hydroxybutanoate + 2-oxoglutarate = (R)-2-hydroxyglutarate + succinate semialdehyde</text>
        <dbReference type="Rhea" id="RHEA:24734"/>
        <dbReference type="ChEBI" id="CHEBI:15801"/>
        <dbReference type="ChEBI" id="CHEBI:16724"/>
        <dbReference type="ChEBI" id="CHEBI:16810"/>
        <dbReference type="ChEBI" id="CHEBI:57706"/>
        <dbReference type="EC" id="1.1.99.24"/>
    </reaction>
</comment>
<comment type="subcellular location">
    <subcellularLocation>
        <location evidence="1">Mitochondrion</location>
    </subcellularLocation>
</comment>
<comment type="similarity">
    <text evidence="3">Belongs to the iron-containing alcohol dehydrogenase family. Hydroxyacid-oxoacid transhydrogenase subfamily.</text>
</comment>
<accession>Q28XT3</accession>
<reference key="1">
    <citation type="journal article" date="2005" name="Genome Res.">
        <title>Comparative genome sequencing of Drosophila pseudoobscura: chromosomal, gene, and cis-element evolution.</title>
        <authorList>
            <person name="Richards S."/>
            <person name="Liu Y."/>
            <person name="Bettencourt B.R."/>
            <person name="Hradecky P."/>
            <person name="Letovsky S."/>
            <person name="Nielsen R."/>
            <person name="Thornton K."/>
            <person name="Hubisz M.J."/>
            <person name="Chen R."/>
            <person name="Meisel R.P."/>
            <person name="Couronne O."/>
            <person name="Hua S."/>
            <person name="Smith M.A."/>
            <person name="Zhang P."/>
            <person name="Liu J."/>
            <person name="Bussemaker H.J."/>
            <person name="van Batenburg M.F."/>
            <person name="Howells S.L."/>
            <person name="Scherer S.E."/>
            <person name="Sodergren E."/>
            <person name="Matthews B.B."/>
            <person name="Crosby M.A."/>
            <person name="Schroeder A.J."/>
            <person name="Ortiz-Barrientos D."/>
            <person name="Rives C.M."/>
            <person name="Metzker M.L."/>
            <person name="Muzny D.M."/>
            <person name="Scott G."/>
            <person name="Steffen D."/>
            <person name="Wheeler D.A."/>
            <person name="Worley K.C."/>
            <person name="Havlak P."/>
            <person name="Durbin K.J."/>
            <person name="Egan A."/>
            <person name="Gill R."/>
            <person name="Hume J."/>
            <person name="Morgan M.B."/>
            <person name="Miner G."/>
            <person name="Hamilton C."/>
            <person name="Huang Y."/>
            <person name="Waldron L."/>
            <person name="Verduzco D."/>
            <person name="Clerc-Blankenburg K.P."/>
            <person name="Dubchak I."/>
            <person name="Noor M.A.F."/>
            <person name="Anderson W."/>
            <person name="White K.P."/>
            <person name="Clark A.G."/>
            <person name="Schaeffer S.W."/>
            <person name="Gelbart W.M."/>
            <person name="Weinstock G.M."/>
            <person name="Gibbs R.A."/>
        </authorList>
    </citation>
    <scope>NUCLEOTIDE SEQUENCE [LARGE SCALE GENOMIC DNA]</scope>
    <source>
        <strain>MV2-25 / Tucson 14011-0121.94</strain>
    </source>
</reference>